<evidence type="ECO:0000250" key="1"/>
<evidence type="ECO:0000255" key="2"/>
<evidence type="ECO:0000305" key="3"/>
<comment type="function">
    <text evidence="1">Component of the Mediator complex, a coactivator involved in the regulated transcription of nearly all RNA polymerase II-dependent genes. Mediator functions as a bridge to convey information from gene-specific regulatory proteins to the basal RNA polymerase II transcription machinery. Mediator is recruited to promoters by direct interactions with regulatory proteins and serves as a scaffold for the assembly of a functional preinitiation complex with RNA polymerase II and the general transcription factors (By similarity).</text>
</comment>
<comment type="subunit">
    <text evidence="1">Component of the Mediator complex.</text>
</comment>
<comment type="subcellular location">
    <subcellularLocation>
        <location evidence="3">Nucleus</location>
    </subcellularLocation>
</comment>
<comment type="similarity">
    <text evidence="3">Belongs to the Mediator complex subunit 9 family.</text>
</comment>
<name>MED9_DROPS</name>
<reference key="1">
    <citation type="journal article" date="2005" name="Genome Res.">
        <title>Comparative genome sequencing of Drosophila pseudoobscura: chromosomal, gene, and cis-element evolution.</title>
        <authorList>
            <person name="Richards S."/>
            <person name="Liu Y."/>
            <person name="Bettencourt B.R."/>
            <person name="Hradecky P."/>
            <person name="Letovsky S."/>
            <person name="Nielsen R."/>
            <person name="Thornton K."/>
            <person name="Hubisz M.J."/>
            <person name="Chen R."/>
            <person name="Meisel R.P."/>
            <person name="Couronne O."/>
            <person name="Hua S."/>
            <person name="Smith M.A."/>
            <person name="Zhang P."/>
            <person name="Liu J."/>
            <person name="Bussemaker H.J."/>
            <person name="van Batenburg M.F."/>
            <person name="Howells S.L."/>
            <person name="Scherer S.E."/>
            <person name="Sodergren E."/>
            <person name="Matthews B.B."/>
            <person name="Crosby M.A."/>
            <person name="Schroeder A.J."/>
            <person name="Ortiz-Barrientos D."/>
            <person name="Rives C.M."/>
            <person name="Metzker M.L."/>
            <person name="Muzny D.M."/>
            <person name="Scott G."/>
            <person name="Steffen D."/>
            <person name="Wheeler D.A."/>
            <person name="Worley K.C."/>
            <person name="Havlak P."/>
            <person name="Durbin K.J."/>
            <person name="Egan A."/>
            <person name="Gill R."/>
            <person name="Hume J."/>
            <person name="Morgan M.B."/>
            <person name="Miner G."/>
            <person name="Hamilton C."/>
            <person name="Huang Y."/>
            <person name="Waldron L."/>
            <person name="Verduzco D."/>
            <person name="Clerc-Blankenburg K.P."/>
            <person name="Dubchak I."/>
            <person name="Noor M.A.F."/>
            <person name="Anderson W."/>
            <person name="White K.P."/>
            <person name="Clark A.G."/>
            <person name="Schaeffer S.W."/>
            <person name="Gelbart W.M."/>
            <person name="Weinstock G.M."/>
            <person name="Gibbs R.A."/>
        </authorList>
    </citation>
    <scope>NUCLEOTIDE SEQUENCE [LARGE SCALE GENOMIC DNA]</scope>
    <source>
        <strain>MV2-25 / Tucson 14011-0121.94</strain>
    </source>
</reference>
<dbReference type="EMBL" id="CM000071">
    <property type="protein sequence ID" value="EAL25412.2"/>
    <property type="molecule type" value="Genomic_DNA"/>
</dbReference>
<dbReference type="RefSeq" id="XP_001360837.2">
    <property type="nucleotide sequence ID" value="XM_001360800.3"/>
</dbReference>
<dbReference type="SMR" id="Q290F0"/>
<dbReference type="FunCoup" id="Q290F0">
    <property type="interactions" value="356"/>
</dbReference>
<dbReference type="STRING" id="46245.Q290F0"/>
<dbReference type="EnsemblMetazoa" id="FBtr0279383">
    <property type="protein sequence ID" value="FBpp0277821"/>
    <property type="gene ID" value="FBgn0078683"/>
</dbReference>
<dbReference type="GeneID" id="4804249"/>
<dbReference type="KEGG" id="dpo:4804249"/>
<dbReference type="CTD" id="55090"/>
<dbReference type="eggNOG" id="ENOG502S47C">
    <property type="taxonomic scope" value="Eukaryota"/>
</dbReference>
<dbReference type="HOGENOM" id="CLU_1817785_0_0_1"/>
<dbReference type="InParanoid" id="Q290F0"/>
<dbReference type="OMA" id="ESQDCNH"/>
<dbReference type="Proteomes" id="UP000001819">
    <property type="component" value="Chromosome 3"/>
</dbReference>
<dbReference type="Bgee" id="FBgn0078683">
    <property type="expression patterns" value="Expressed in male reproductive system and 3 other cell types or tissues"/>
</dbReference>
<dbReference type="GO" id="GO:0016592">
    <property type="term" value="C:mediator complex"/>
    <property type="evidence" value="ECO:0000250"/>
    <property type="project" value="UniProtKB"/>
</dbReference>
<dbReference type="GO" id="GO:0003712">
    <property type="term" value="F:transcription coregulator activity"/>
    <property type="evidence" value="ECO:0000250"/>
    <property type="project" value="UniProtKB"/>
</dbReference>
<dbReference type="GO" id="GO:0006357">
    <property type="term" value="P:regulation of transcription by RNA polymerase II"/>
    <property type="evidence" value="ECO:0000250"/>
    <property type="project" value="UniProtKB"/>
</dbReference>
<dbReference type="InterPro" id="IPR037212">
    <property type="entry name" value="Med7/Med21-like"/>
</dbReference>
<dbReference type="InterPro" id="IPR011425">
    <property type="entry name" value="Med9"/>
</dbReference>
<dbReference type="InterPro" id="IPR039242">
    <property type="entry name" value="MED9_metazoa"/>
</dbReference>
<dbReference type="PANTHER" id="PTHR20844:SF0">
    <property type="entry name" value="MEDIATOR OF RNA POLYMERASE II TRANSCRIPTION SUBUNIT 9"/>
    <property type="match status" value="1"/>
</dbReference>
<dbReference type="PANTHER" id="PTHR20844">
    <property type="entry name" value="MEDIATOR OF RNA POLYMERASE II TRANSCRIPTION, SUBUNIT 9"/>
    <property type="match status" value="1"/>
</dbReference>
<dbReference type="Pfam" id="PF07544">
    <property type="entry name" value="Med9"/>
    <property type="match status" value="1"/>
</dbReference>
<dbReference type="SUPFAM" id="SSF140718">
    <property type="entry name" value="Mediator hinge subcomplex-like"/>
    <property type="match status" value="1"/>
</dbReference>
<accession>Q290F0</accession>
<proteinExistence type="inferred from homology"/>
<gene>
    <name type="primary">MED9</name>
    <name type="ORF">GA18683</name>
</gene>
<protein>
    <recommendedName>
        <fullName>Mediator of RNA polymerase II transcription subunit 9</fullName>
    </recommendedName>
    <alternativeName>
        <fullName>Mediator complex subunit 9</fullName>
    </alternativeName>
</protein>
<organism>
    <name type="scientific">Drosophila pseudoobscura pseudoobscura</name>
    <name type="common">Fruit fly</name>
    <dbReference type="NCBI Taxonomy" id="46245"/>
    <lineage>
        <taxon>Eukaryota</taxon>
        <taxon>Metazoa</taxon>
        <taxon>Ecdysozoa</taxon>
        <taxon>Arthropoda</taxon>
        <taxon>Hexapoda</taxon>
        <taxon>Insecta</taxon>
        <taxon>Pterygota</taxon>
        <taxon>Neoptera</taxon>
        <taxon>Endopterygota</taxon>
        <taxon>Diptera</taxon>
        <taxon>Brachycera</taxon>
        <taxon>Muscomorpha</taxon>
        <taxon>Ephydroidea</taxon>
        <taxon>Drosophilidae</taxon>
        <taxon>Drosophila</taxon>
        <taxon>Sophophora</taxon>
    </lineage>
</organism>
<sequence>MELSPNNQIEDRKPILTADGLVQTSNSPFEPTISQETQTSNGIGTQCQLTVDQLDIEILPIIYDVVRCVEKDPLENAVKLRESQDCNHKIFELQKRFESAREQIRQLPGIDYNKDEQLQRLELLRNQFKLKQQLIRKYKDTEF</sequence>
<feature type="chain" id="PRO_0000304151" description="Mediator of RNA polymerase II transcription subunit 9">
    <location>
        <begin position="1"/>
        <end position="143"/>
    </location>
</feature>
<feature type="coiled-coil region" evidence="2">
    <location>
        <begin position="84"/>
        <end position="141"/>
    </location>
</feature>
<keyword id="KW-0010">Activator</keyword>
<keyword id="KW-0175">Coiled coil</keyword>
<keyword id="KW-0539">Nucleus</keyword>
<keyword id="KW-1185">Reference proteome</keyword>
<keyword id="KW-0804">Transcription</keyword>
<keyword id="KW-0805">Transcription regulation</keyword>